<gene>
    <name evidence="1" type="primary">leuS</name>
    <name type="ordered locus">SPO3432</name>
</gene>
<protein>
    <recommendedName>
        <fullName evidence="1">Leucine--tRNA ligase</fullName>
        <ecNumber evidence="1">6.1.1.4</ecNumber>
    </recommendedName>
    <alternativeName>
        <fullName evidence="1">Leucyl-tRNA synthetase</fullName>
        <shortName evidence="1">LeuRS</shortName>
    </alternativeName>
</protein>
<sequence length="852" mass="94818">MSRYSATEIEAKWQEAWDKAGIFRAARTADKPKYYVLEMFPYPSGRIHIGHVRNYTMGDVIARYKLSNGFNVLHPMGFDAFGMPAENAAMASGGHPKDWTYKNIETMVAQMKPLGFGLDWSRMFATCDPEYYGQQQALFLDFLEKGLVYRKNAVVNWDPVDMTVLANEQVEDGRGWRSGALVERRELTQWFFKISDMSGELLDALDTLDDWPAKVKLMQANWIGKSRGLQFSWALTEPAHGIEALDVYTTRPDTLMGASFLGISPDHPLTKALEAENPDLAAKVAEMRKGGTTEEAIEKAEKLGADTGLRVRHPLNPDWELPVWVANFILMDYGTGAIFACPAHDQRDLDFCRKYDLPVIDTFVALDDPKPIATEAFVPLKTEKVKWIDHFAGLDVATGQEAIDTTIDWMEAKGLGTGVTKFRLRDWGLSRQRYWGCPIPVVHCDACGVVPEKKENLPIRLPDDVTFDVPGNPLDRHPTWRDCACPSCGKPARRETDTMDTFVDSSWYFARFTAPRAETPTDMAEAEYWMNVDQYIGGIEHAILHLLYSRFFARAMHICGHLPEKSKEPFNALFTQGMVTHAIYKTTGADDRPVYHYPEAVRLEGGKGYLEDGTEVEIIPSAKMSKSKNNVVDPVAIIDRFGADTARWFVLSDSPPERDVEWTDAGAEAAHKHLNRVWNLCDRIAAMDSAAPGEGDDDLLREMHKCIRDVTNGIESFGFNASIAKLYAFTNTLAKSKAGAAAQKQAIMTLAQLMSPMTPHLAEDIWAHQGGEGLIAAAPWPVADEAMLVDALVTLPVQINGKRRAEISVPADMDKTQVEKLALSTDAVQKALDGAAPKKVIVVPGRIVNVVV</sequence>
<accession>Q5LMY0</accession>
<evidence type="ECO:0000255" key="1">
    <source>
        <dbReference type="HAMAP-Rule" id="MF_00049"/>
    </source>
</evidence>
<keyword id="KW-0030">Aminoacyl-tRNA synthetase</keyword>
<keyword id="KW-0067">ATP-binding</keyword>
<keyword id="KW-0963">Cytoplasm</keyword>
<keyword id="KW-0436">Ligase</keyword>
<keyword id="KW-0547">Nucleotide-binding</keyword>
<keyword id="KW-0648">Protein biosynthesis</keyword>
<keyword id="KW-1185">Reference proteome</keyword>
<name>SYL_RUEPO</name>
<proteinExistence type="inferred from homology"/>
<feature type="chain" id="PRO_0000152081" description="Leucine--tRNA ligase">
    <location>
        <begin position="1"/>
        <end position="852"/>
    </location>
</feature>
<feature type="short sequence motif" description="'HIGH' region">
    <location>
        <begin position="41"/>
        <end position="51"/>
    </location>
</feature>
<feature type="short sequence motif" description="'KMSKS' region">
    <location>
        <begin position="623"/>
        <end position="627"/>
    </location>
</feature>
<feature type="binding site" evidence="1">
    <location>
        <position position="626"/>
    </location>
    <ligand>
        <name>ATP</name>
        <dbReference type="ChEBI" id="CHEBI:30616"/>
    </ligand>
</feature>
<organism>
    <name type="scientific">Ruegeria pomeroyi (strain ATCC 700808 / DSM 15171 / DSS-3)</name>
    <name type="common">Silicibacter pomeroyi</name>
    <dbReference type="NCBI Taxonomy" id="246200"/>
    <lineage>
        <taxon>Bacteria</taxon>
        <taxon>Pseudomonadati</taxon>
        <taxon>Pseudomonadota</taxon>
        <taxon>Alphaproteobacteria</taxon>
        <taxon>Rhodobacterales</taxon>
        <taxon>Roseobacteraceae</taxon>
        <taxon>Ruegeria</taxon>
    </lineage>
</organism>
<reference key="1">
    <citation type="journal article" date="2004" name="Nature">
        <title>Genome sequence of Silicibacter pomeroyi reveals adaptations to the marine environment.</title>
        <authorList>
            <person name="Moran M.A."/>
            <person name="Buchan A."/>
            <person name="Gonzalez J.M."/>
            <person name="Heidelberg J.F."/>
            <person name="Whitman W.B."/>
            <person name="Kiene R.P."/>
            <person name="Henriksen J.R."/>
            <person name="King G.M."/>
            <person name="Belas R."/>
            <person name="Fuqua C."/>
            <person name="Brinkac L.M."/>
            <person name="Lewis M."/>
            <person name="Johri S."/>
            <person name="Weaver B."/>
            <person name="Pai G."/>
            <person name="Eisen J.A."/>
            <person name="Rahe E."/>
            <person name="Sheldon W.M."/>
            <person name="Ye W."/>
            <person name="Miller T.R."/>
            <person name="Carlton J."/>
            <person name="Rasko D.A."/>
            <person name="Paulsen I.T."/>
            <person name="Ren Q."/>
            <person name="Daugherty S.C."/>
            <person name="DeBoy R.T."/>
            <person name="Dodson R.J."/>
            <person name="Durkin A.S."/>
            <person name="Madupu R."/>
            <person name="Nelson W.C."/>
            <person name="Sullivan S.A."/>
            <person name="Rosovitz M.J."/>
            <person name="Haft D.H."/>
            <person name="Selengut J."/>
            <person name="Ward N."/>
        </authorList>
    </citation>
    <scope>NUCLEOTIDE SEQUENCE [LARGE SCALE GENOMIC DNA]</scope>
    <source>
        <strain>ATCC 700808 / DSM 15171 / DSS-3</strain>
    </source>
</reference>
<reference key="2">
    <citation type="journal article" date="2014" name="Stand. Genomic Sci.">
        <title>An updated genome annotation for the model marine bacterium Ruegeria pomeroyi DSS-3.</title>
        <authorList>
            <person name="Rivers A.R."/>
            <person name="Smith C.B."/>
            <person name="Moran M.A."/>
        </authorList>
    </citation>
    <scope>GENOME REANNOTATION</scope>
    <source>
        <strain>ATCC 700808 / DSM 15171 / DSS-3</strain>
    </source>
</reference>
<dbReference type="EC" id="6.1.1.4" evidence="1"/>
<dbReference type="EMBL" id="CP000031">
    <property type="protein sequence ID" value="AAV96658.1"/>
    <property type="molecule type" value="Genomic_DNA"/>
</dbReference>
<dbReference type="RefSeq" id="WP_011049115.1">
    <property type="nucleotide sequence ID" value="NC_003911.12"/>
</dbReference>
<dbReference type="SMR" id="Q5LMY0"/>
<dbReference type="STRING" id="246200.SPO3432"/>
<dbReference type="PaxDb" id="246200-SPO3432"/>
<dbReference type="KEGG" id="sil:SPO3432"/>
<dbReference type="eggNOG" id="COG0495">
    <property type="taxonomic scope" value="Bacteria"/>
</dbReference>
<dbReference type="HOGENOM" id="CLU_004427_0_0_5"/>
<dbReference type="OrthoDB" id="9810365at2"/>
<dbReference type="Proteomes" id="UP000001023">
    <property type="component" value="Chromosome"/>
</dbReference>
<dbReference type="GO" id="GO:0005829">
    <property type="term" value="C:cytosol"/>
    <property type="evidence" value="ECO:0007669"/>
    <property type="project" value="TreeGrafter"/>
</dbReference>
<dbReference type="GO" id="GO:0002161">
    <property type="term" value="F:aminoacyl-tRNA deacylase activity"/>
    <property type="evidence" value="ECO:0007669"/>
    <property type="project" value="InterPro"/>
</dbReference>
<dbReference type="GO" id="GO:0005524">
    <property type="term" value="F:ATP binding"/>
    <property type="evidence" value="ECO:0007669"/>
    <property type="project" value="UniProtKB-UniRule"/>
</dbReference>
<dbReference type="GO" id="GO:0004823">
    <property type="term" value="F:leucine-tRNA ligase activity"/>
    <property type="evidence" value="ECO:0007669"/>
    <property type="project" value="UniProtKB-UniRule"/>
</dbReference>
<dbReference type="GO" id="GO:0006429">
    <property type="term" value="P:leucyl-tRNA aminoacylation"/>
    <property type="evidence" value="ECO:0007669"/>
    <property type="project" value="UniProtKB-UniRule"/>
</dbReference>
<dbReference type="CDD" id="cd07958">
    <property type="entry name" value="Anticodon_Ia_Leu_BEm"/>
    <property type="match status" value="1"/>
</dbReference>
<dbReference type="CDD" id="cd00812">
    <property type="entry name" value="LeuRS_core"/>
    <property type="match status" value="1"/>
</dbReference>
<dbReference type="FunFam" id="1.10.730.10:FF:000002">
    <property type="entry name" value="Leucine--tRNA ligase"/>
    <property type="match status" value="1"/>
</dbReference>
<dbReference type="FunFam" id="3.10.20.590:FF:000001">
    <property type="entry name" value="Leucine--tRNA ligase"/>
    <property type="match status" value="1"/>
</dbReference>
<dbReference type="FunFam" id="3.40.50.620:FF:000003">
    <property type="entry name" value="Leucine--tRNA ligase"/>
    <property type="match status" value="1"/>
</dbReference>
<dbReference type="Gene3D" id="2.20.28.290">
    <property type="match status" value="1"/>
</dbReference>
<dbReference type="Gene3D" id="3.10.20.590">
    <property type="match status" value="1"/>
</dbReference>
<dbReference type="Gene3D" id="3.40.50.620">
    <property type="entry name" value="HUPs"/>
    <property type="match status" value="2"/>
</dbReference>
<dbReference type="Gene3D" id="1.10.730.10">
    <property type="entry name" value="Isoleucyl-tRNA Synthetase, Domain 1"/>
    <property type="match status" value="1"/>
</dbReference>
<dbReference type="Gene3D" id="3.90.740.10">
    <property type="entry name" value="Valyl/Leucyl/Isoleucyl-tRNA synthetase, editing domain"/>
    <property type="match status" value="1"/>
</dbReference>
<dbReference type="HAMAP" id="MF_00049_B">
    <property type="entry name" value="Leu_tRNA_synth_B"/>
    <property type="match status" value="1"/>
</dbReference>
<dbReference type="InterPro" id="IPR001412">
    <property type="entry name" value="aa-tRNA-synth_I_CS"/>
</dbReference>
<dbReference type="InterPro" id="IPR002300">
    <property type="entry name" value="aa-tRNA-synth_Ia"/>
</dbReference>
<dbReference type="InterPro" id="IPR002302">
    <property type="entry name" value="Leu-tRNA-ligase"/>
</dbReference>
<dbReference type="InterPro" id="IPR025709">
    <property type="entry name" value="Leu_tRNA-synth_edit"/>
</dbReference>
<dbReference type="InterPro" id="IPR013155">
    <property type="entry name" value="M/V/L/I-tRNA-synth_anticd-bd"/>
</dbReference>
<dbReference type="InterPro" id="IPR015413">
    <property type="entry name" value="Methionyl/Leucyl_tRNA_Synth"/>
</dbReference>
<dbReference type="InterPro" id="IPR014729">
    <property type="entry name" value="Rossmann-like_a/b/a_fold"/>
</dbReference>
<dbReference type="InterPro" id="IPR009080">
    <property type="entry name" value="tRNAsynth_Ia_anticodon-bd"/>
</dbReference>
<dbReference type="InterPro" id="IPR009008">
    <property type="entry name" value="Val/Leu/Ile-tRNA-synth_edit"/>
</dbReference>
<dbReference type="NCBIfam" id="TIGR00396">
    <property type="entry name" value="leuS_bact"/>
    <property type="match status" value="1"/>
</dbReference>
<dbReference type="PANTHER" id="PTHR43740:SF2">
    <property type="entry name" value="LEUCINE--TRNA LIGASE, MITOCHONDRIAL"/>
    <property type="match status" value="1"/>
</dbReference>
<dbReference type="PANTHER" id="PTHR43740">
    <property type="entry name" value="LEUCYL-TRNA SYNTHETASE"/>
    <property type="match status" value="1"/>
</dbReference>
<dbReference type="Pfam" id="PF08264">
    <property type="entry name" value="Anticodon_1"/>
    <property type="match status" value="1"/>
</dbReference>
<dbReference type="Pfam" id="PF00133">
    <property type="entry name" value="tRNA-synt_1"/>
    <property type="match status" value="2"/>
</dbReference>
<dbReference type="Pfam" id="PF13603">
    <property type="entry name" value="tRNA-synt_1_2"/>
    <property type="match status" value="1"/>
</dbReference>
<dbReference type="Pfam" id="PF09334">
    <property type="entry name" value="tRNA-synt_1g"/>
    <property type="match status" value="1"/>
</dbReference>
<dbReference type="PRINTS" id="PR00985">
    <property type="entry name" value="TRNASYNTHLEU"/>
</dbReference>
<dbReference type="SUPFAM" id="SSF47323">
    <property type="entry name" value="Anticodon-binding domain of a subclass of class I aminoacyl-tRNA synthetases"/>
    <property type="match status" value="1"/>
</dbReference>
<dbReference type="SUPFAM" id="SSF52374">
    <property type="entry name" value="Nucleotidylyl transferase"/>
    <property type="match status" value="1"/>
</dbReference>
<dbReference type="SUPFAM" id="SSF50677">
    <property type="entry name" value="ValRS/IleRS/LeuRS editing domain"/>
    <property type="match status" value="1"/>
</dbReference>
<dbReference type="PROSITE" id="PS00178">
    <property type="entry name" value="AA_TRNA_LIGASE_I"/>
    <property type="match status" value="1"/>
</dbReference>
<comment type="catalytic activity">
    <reaction evidence="1">
        <text>tRNA(Leu) + L-leucine + ATP = L-leucyl-tRNA(Leu) + AMP + diphosphate</text>
        <dbReference type="Rhea" id="RHEA:11688"/>
        <dbReference type="Rhea" id="RHEA-COMP:9613"/>
        <dbReference type="Rhea" id="RHEA-COMP:9622"/>
        <dbReference type="ChEBI" id="CHEBI:30616"/>
        <dbReference type="ChEBI" id="CHEBI:33019"/>
        <dbReference type="ChEBI" id="CHEBI:57427"/>
        <dbReference type="ChEBI" id="CHEBI:78442"/>
        <dbReference type="ChEBI" id="CHEBI:78494"/>
        <dbReference type="ChEBI" id="CHEBI:456215"/>
        <dbReference type="EC" id="6.1.1.4"/>
    </reaction>
</comment>
<comment type="subcellular location">
    <subcellularLocation>
        <location evidence="1">Cytoplasm</location>
    </subcellularLocation>
</comment>
<comment type="similarity">
    <text evidence="1">Belongs to the class-I aminoacyl-tRNA synthetase family.</text>
</comment>